<comment type="function">
    <text evidence="1">Catalyzes the conversion of glucosamine-6-phosphate to glucosamine-1-phosphate.</text>
</comment>
<comment type="catalytic activity">
    <reaction evidence="1">
        <text>alpha-D-glucosamine 1-phosphate = D-glucosamine 6-phosphate</text>
        <dbReference type="Rhea" id="RHEA:23424"/>
        <dbReference type="ChEBI" id="CHEBI:58516"/>
        <dbReference type="ChEBI" id="CHEBI:58725"/>
        <dbReference type="EC" id="5.4.2.10"/>
    </reaction>
</comment>
<comment type="cofactor">
    <cofactor evidence="1">
        <name>Mg(2+)</name>
        <dbReference type="ChEBI" id="CHEBI:18420"/>
    </cofactor>
    <text evidence="1">Binds 1 Mg(2+) ion per subunit.</text>
</comment>
<comment type="PTM">
    <text evidence="1">Activated by phosphorylation.</text>
</comment>
<comment type="similarity">
    <text evidence="1">Belongs to the phosphohexose mutase family.</text>
</comment>
<feature type="chain" id="PRO_0000147964" description="Phosphoglucosamine mutase">
    <location>
        <begin position="1"/>
        <end position="451"/>
    </location>
</feature>
<feature type="active site" description="Phosphoserine intermediate" evidence="1">
    <location>
        <position position="102"/>
    </location>
</feature>
<feature type="binding site" description="via phosphate group" evidence="1">
    <location>
        <position position="102"/>
    </location>
    <ligand>
        <name>Mg(2+)</name>
        <dbReference type="ChEBI" id="CHEBI:18420"/>
    </ligand>
</feature>
<feature type="binding site" evidence="1">
    <location>
        <position position="242"/>
    </location>
    <ligand>
        <name>Mg(2+)</name>
        <dbReference type="ChEBI" id="CHEBI:18420"/>
    </ligand>
</feature>
<feature type="binding site" evidence="1">
    <location>
        <position position="244"/>
    </location>
    <ligand>
        <name>Mg(2+)</name>
        <dbReference type="ChEBI" id="CHEBI:18420"/>
    </ligand>
</feature>
<feature type="binding site" evidence="1">
    <location>
        <position position="246"/>
    </location>
    <ligand>
        <name>Mg(2+)</name>
        <dbReference type="ChEBI" id="CHEBI:18420"/>
    </ligand>
</feature>
<feature type="modified residue" description="Phosphoserine" evidence="1">
    <location>
        <position position="102"/>
    </location>
</feature>
<gene>
    <name evidence="1" type="primary">glmM</name>
    <name type="synonym">femD</name>
    <name type="ordered locus">SA1965</name>
</gene>
<sequence>MGKYFGTDGVRGVANQELTPELAFKLGRYGGYVLAHNKGEKHPRVLVGRDTRVSGEMLESALIAGLISIGAEVMRLGIISTPGVAYLTRDMGAELGVMISASHNPVADNGIKFFGSDGFKLSDEQENEIEALLDQENPELPRPVGNDIVHYSDYFEGAQKYLSYLKSTVDVNFEGLKIVLDGANGSTSSLAPFLFGDLEADTETIGCSPDGYNINEKCGSTHPEKLAEKVVETESDFGLAFDGDGDRIIAVDENGQIVDGDQIMFIIGQEMHKNQELNNDMIVSTVMSNLGFYKALEQEGIKSNKTKVGDRYVVEEMRRGNYNLGGEQSGHIVMMDYNTTGDGLLTGIQLASVIKMTGKSLSELAGQMKKYPQSLINVRVTDKYRVEENVDVKEVMTKVEVEMNGEGRILVRPSGTEPLVRVMVEAATDEDAERFAQQIADVVQDKMGLDK</sequence>
<keyword id="KW-0413">Isomerase</keyword>
<keyword id="KW-0460">Magnesium</keyword>
<keyword id="KW-0479">Metal-binding</keyword>
<keyword id="KW-0597">Phosphoprotein</keyword>
<organism>
    <name type="scientific">Staphylococcus aureus (strain N315)</name>
    <dbReference type="NCBI Taxonomy" id="158879"/>
    <lineage>
        <taxon>Bacteria</taxon>
        <taxon>Bacillati</taxon>
        <taxon>Bacillota</taxon>
        <taxon>Bacilli</taxon>
        <taxon>Bacillales</taxon>
        <taxon>Staphylococcaceae</taxon>
        <taxon>Staphylococcus</taxon>
    </lineage>
</organism>
<accession>P99087</accession>
<accession>Q99QR5</accession>
<protein>
    <recommendedName>
        <fullName evidence="1">Phosphoglucosamine mutase</fullName>
        <ecNumber evidence="1">5.4.2.10</ecNumber>
    </recommendedName>
</protein>
<reference key="1">
    <citation type="journal article" date="2001" name="Lancet">
        <title>Whole genome sequencing of meticillin-resistant Staphylococcus aureus.</title>
        <authorList>
            <person name="Kuroda M."/>
            <person name="Ohta T."/>
            <person name="Uchiyama I."/>
            <person name="Baba T."/>
            <person name="Yuzawa H."/>
            <person name="Kobayashi I."/>
            <person name="Cui L."/>
            <person name="Oguchi A."/>
            <person name="Aoki K."/>
            <person name="Nagai Y."/>
            <person name="Lian J.-Q."/>
            <person name="Ito T."/>
            <person name="Kanamori M."/>
            <person name="Matsumaru H."/>
            <person name="Maruyama A."/>
            <person name="Murakami H."/>
            <person name="Hosoyama A."/>
            <person name="Mizutani-Ui Y."/>
            <person name="Takahashi N.K."/>
            <person name="Sawano T."/>
            <person name="Inoue R."/>
            <person name="Kaito C."/>
            <person name="Sekimizu K."/>
            <person name="Hirakawa H."/>
            <person name="Kuhara S."/>
            <person name="Goto S."/>
            <person name="Yabuzaki J."/>
            <person name="Kanehisa M."/>
            <person name="Yamashita A."/>
            <person name="Oshima K."/>
            <person name="Furuya K."/>
            <person name="Yoshino C."/>
            <person name="Shiba T."/>
            <person name="Hattori M."/>
            <person name="Ogasawara N."/>
            <person name="Hayashi H."/>
            <person name="Hiramatsu K."/>
        </authorList>
    </citation>
    <scope>NUCLEOTIDE SEQUENCE [LARGE SCALE GENOMIC DNA]</scope>
    <source>
        <strain>N315</strain>
    </source>
</reference>
<reference key="2">
    <citation type="journal article" date="2005" name="J. Microbiol. Methods">
        <title>Correlation of proteomic and transcriptomic profiles of Staphylococcus aureus during the post-exponential phase of growth.</title>
        <authorList>
            <person name="Scherl A."/>
            <person name="Francois P."/>
            <person name="Bento M."/>
            <person name="Deshusses J.M."/>
            <person name="Charbonnier Y."/>
            <person name="Converset V."/>
            <person name="Huyghe A."/>
            <person name="Walter N."/>
            <person name="Hoogland C."/>
            <person name="Appel R.D."/>
            <person name="Sanchez J.-C."/>
            <person name="Zimmermann-Ivol C.G."/>
            <person name="Corthals G.L."/>
            <person name="Hochstrasser D.F."/>
            <person name="Schrenzel J."/>
        </authorList>
    </citation>
    <scope>IDENTIFICATION BY MASS SPECTROMETRY</scope>
    <source>
        <strain>N315</strain>
    </source>
</reference>
<reference key="3">
    <citation type="submission" date="2007-10" db="UniProtKB">
        <title>Shotgun proteomic analysis of total and membrane protein extracts of S. aureus strain N315.</title>
        <authorList>
            <person name="Vaezzadeh A.R."/>
            <person name="Deshusses J."/>
            <person name="Lescuyer P."/>
            <person name="Hochstrasser D.F."/>
        </authorList>
    </citation>
    <scope>IDENTIFICATION BY MASS SPECTROMETRY [LARGE SCALE ANALYSIS]</scope>
    <source>
        <strain>N315</strain>
    </source>
</reference>
<name>GLMM_STAAN</name>
<proteinExistence type="evidence at protein level"/>
<dbReference type="EC" id="5.4.2.10" evidence="1"/>
<dbReference type="EMBL" id="BA000018">
    <property type="protein sequence ID" value="BAB43254.1"/>
    <property type="molecule type" value="Genomic_DNA"/>
</dbReference>
<dbReference type="PIR" id="E90011">
    <property type="entry name" value="E90011"/>
</dbReference>
<dbReference type="RefSeq" id="WP_000521495.1">
    <property type="nucleotide sequence ID" value="NC_002745.2"/>
</dbReference>
<dbReference type="SMR" id="P99087"/>
<dbReference type="EnsemblBacteria" id="BAB43254">
    <property type="protein sequence ID" value="BAB43254"/>
    <property type="gene ID" value="BAB43254"/>
</dbReference>
<dbReference type="KEGG" id="sau:SA1965"/>
<dbReference type="HOGENOM" id="CLU_016950_7_0_9"/>
<dbReference type="GO" id="GO:0005829">
    <property type="term" value="C:cytosol"/>
    <property type="evidence" value="ECO:0007669"/>
    <property type="project" value="TreeGrafter"/>
</dbReference>
<dbReference type="GO" id="GO:0000287">
    <property type="term" value="F:magnesium ion binding"/>
    <property type="evidence" value="ECO:0007669"/>
    <property type="project" value="UniProtKB-UniRule"/>
</dbReference>
<dbReference type="GO" id="GO:0008966">
    <property type="term" value="F:phosphoglucosamine mutase activity"/>
    <property type="evidence" value="ECO:0007669"/>
    <property type="project" value="UniProtKB-UniRule"/>
</dbReference>
<dbReference type="GO" id="GO:0004615">
    <property type="term" value="F:phosphomannomutase activity"/>
    <property type="evidence" value="ECO:0007669"/>
    <property type="project" value="TreeGrafter"/>
</dbReference>
<dbReference type="GO" id="GO:0005975">
    <property type="term" value="P:carbohydrate metabolic process"/>
    <property type="evidence" value="ECO:0007669"/>
    <property type="project" value="InterPro"/>
</dbReference>
<dbReference type="GO" id="GO:0009252">
    <property type="term" value="P:peptidoglycan biosynthetic process"/>
    <property type="evidence" value="ECO:0007669"/>
    <property type="project" value="TreeGrafter"/>
</dbReference>
<dbReference type="GO" id="GO:0006048">
    <property type="term" value="P:UDP-N-acetylglucosamine biosynthetic process"/>
    <property type="evidence" value="ECO:0007669"/>
    <property type="project" value="TreeGrafter"/>
</dbReference>
<dbReference type="CDD" id="cd05802">
    <property type="entry name" value="GlmM"/>
    <property type="match status" value="1"/>
</dbReference>
<dbReference type="FunFam" id="3.30.310.50:FF:000001">
    <property type="entry name" value="Phosphoglucosamine mutase"/>
    <property type="match status" value="1"/>
</dbReference>
<dbReference type="FunFam" id="3.40.120.10:FF:000001">
    <property type="entry name" value="Phosphoglucosamine mutase"/>
    <property type="match status" value="1"/>
</dbReference>
<dbReference type="FunFam" id="3.40.120.10:FF:000002">
    <property type="entry name" value="Phosphoglucosamine mutase"/>
    <property type="match status" value="1"/>
</dbReference>
<dbReference type="Gene3D" id="3.40.120.10">
    <property type="entry name" value="Alpha-D-Glucose-1,6-Bisphosphate, subunit A, domain 3"/>
    <property type="match status" value="3"/>
</dbReference>
<dbReference type="Gene3D" id="3.30.310.50">
    <property type="entry name" value="Alpha-D-phosphohexomutase, C-terminal domain"/>
    <property type="match status" value="1"/>
</dbReference>
<dbReference type="HAMAP" id="MF_01554_B">
    <property type="entry name" value="GlmM_B"/>
    <property type="match status" value="1"/>
</dbReference>
<dbReference type="InterPro" id="IPR005844">
    <property type="entry name" value="A-D-PHexomutase_a/b/a-I"/>
</dbReference>
<dbReference type="InterPro" id="IPR016055">
    <property type="entry name" value="A-D-PHexomutase_a/b/a-I/II/III"/>
</dbReference>
<dbReference type="InterPro" id="IPR005845">
    <property type="entry name" value="A-D-PHexomutase_a/b/a-II"/>
</dbReference>
<dbReference type="InterPro" id="IPR005846">
    <property type="entry name" value="A-D-PHexomutase_a/b/a-III"/>
</dbReference>
<dbReference type="InterPro" id="IPR005843">
    <property type="entry name" value="A-D-PHexomutase_C"/>
</dbReference>
<dbReference type="InterPro" id="IPR036900">
    <property type="entry name" value="A-D-PHexomutase_C_sf"/>
</dbReference>
<dbReference type="InterPro" id="IPR016066">
    <property type="entry name" value="A-D-PHexomutase_CS"/>
</dbReference>
<dbReference type="InterPro" id="IPR005841">
    <property type="entry name" value="Alpha-D-phosphohexomutase_SF"/>
</dbReference>
<dbReference type="InterPro" id="IPR006352">
    <property type="entry name" value="GlmM_bact"/>
</dbReference>
<dbReference type="InterPro" id="IPR050060">
    <property type="entry name" value="Phosphoglucosamine_mutase"/>
</dbReference>
<dbReference type="NCBIfam" id="TIGR01455">
    <property type="entry name" value="glmM"/>
    <property type="match status" value="1"/>
</dbReference>
<dbReference type="NCBIfam" id="NF008139">
    <property type="entry name" value="PRK10887.1"/>
    <property type="match status" value="1"/>
</dbReference>
<dbReference type="PANTHER" id="PTHR42946:SF1">
    <property type="entry name" value="PHOSPHOGLUCOMUTASE (ALPHA-D-GLUCOSE-1,6-BISPHOSPHATE-DEPENDENT)"/>
    <property type="match status" value="1"/>
</dbReference>
<dbReference type="PANTHER" id="PTHR42946">
    <property type="entry name" value="PHOSPHOHEXOSE MUTASE"/>
    <property type="match status" value="1"/>
</dbReference>
<dbReference type="Pfam" id="PF02878">
    <property type="entry name" value="PGM_PMM_I"/>
    <property type="match status" value="1"/>
</dbReference>
<dbReference type="Pfam" id="PF02879">
    <property type="entry name" value="PGM_PMM_II"/>
    <property type="match status" value="1"/>
</dbReference>
<dbReference type="Pfam" id="PF02880">
    <property type="entry name" value="PGM_PMM_III"/>
    <property type="match status" value="1"/>
</dbReference>
<dbReference type="Pfam" id="PF00408">
    <property type="entry name" value="PGM_PMM_IV"/>
    <property type="match status" value="1"/>
</dbReference>
<dbReference type="PRINTS" id="PR00509">
    <property type="entry name" value="PGMPMM"/>
</dbReference>
<dbReference type="SUPFAM" id="SSF55957">
    <property type="entry name" value="Phosphoglucomutase, C-terminal domain"/>
    <property type="match status" value="1"/>
</dbReference>
<dbReference type="SUPFAM" id="SSF53738">
    <property type="entry name" value="Phosphoglucomutase, first 3 domains"/>
    <property type="match status" value="3"/>
</dbReference>
<dbReference type="PROSITE" id="PS00710">
    <property type="entry name" value="PGM_PMM"/>
    <property type="match status" value="1"/>
</dbReference>
<evidence type="ECO:0000255" key="1">
    <source>
        <dbReference type="HAMAP-Rule" id="MF_01554"/>
    </source>
</evidence>